<keyword id="KW-0975">Bacterial flagellum</keyword>
<keyword id="KW-0175">Coiled coil</keyword>
<keyword id="KW-0574">Periplasm</keyword>
<keyword id="KW-1185">Reference proteome</keyword>
<proteinExistence type="inferred from homology"/>
<sequence length="722" mass="78400">MSDVRIPGVGAGKYDNLIQSLMKKERIPRDNAAAKVKVYEVQNNALKDVERYARDLRDAVKGLYSFNNPFAEKEAHSSNERAFTVDATRDAAEQNHTLRVKDIAQGDAFLSDPLPEDFRVPSGTYTFCIGEKKICVSWKGGHYRDFIRAVNKQGKDSLTLSEIKTSGASRALLFRSELTGKSSRLSFEDAALDLALRLRVVQEARSDVFTQDVLSVGPGKHARLDFPHPLRAQAGLTLEFVASLEGASIANEESRAHTPAQGGAPTSSHGNTASAAHNQDGAAAVRPTEPANGAPVQEETSSVFFEGVTVKNEASQGDLPTTDGLEKYPAVDDKGDNPRAPGESQGTATHEGSGSSTDNADDTRSTGALAGSGKLALESLQGHALPLPPLVLTQNAPQMVSIPLREYGDVRALILDNAQARGALTLRAIRVRAEDAPGGYVPVNPASQAQDAAFDFDGVHVTRGTNSITDLIPGVTLSLHERTEKTETLSVTPDVNAMKNAIIEFVAKYNRLMAEINIVTSNKSAIIDELAYLTPEEKKKETEQLGSLHGDSTLLMLKDRLRRNTSNAYRAGDDGASRTLAHIGISTKAHASSGINTAQLRGYLEIDEEKLHSSLNAQKDQVRALFGHDSDGDLLVDNGVAFTLTELLNPYLGRSGIFAIRSNGVDERIKSTEKRVETYDKQLEKKERELRHKYHTMDGALRSLQKQSDAIQNFNQSVRNRN</sequence>
<evidence type="ECO:0000250" key="1"/>
<evidence type="ECO:0000255" key="2"/>
<evidence type="ECO:0000256" key="3">
    <source>
        <dbReference type="SAM" id="MobiDB-lite"/>
    </source>
</evidence>
<evidence type="ECO:0000305" key="4"/>
<organism>
    <name type="scientific">Treponema pallidum (strain Nichols)</name>
    <dbReference type="NCBI Taxonomy" id="243276"/>
    <lineage>
        <taxon>Bacteria</taxon>
        <taxon>Pseudomonadati</taxon>
        <taxon>Spirochaetota</taxon>
        <taxon>Spirochaetia</taxon>
        <taxon>Spirochaetales</taxon>
        <taxon>Treponemataceae</taxon>
        <taxon>Treponema</taxon>
    </lineage>
</organism>
<feature type="chain" id="PRO_0000177027" description="Flagellar hook-associated protein 2">
    <location>
        <begin position="1"/>
        <end position="722"/>
    </location>
</feature>
<feature type="region of interest" description="Disordered" evidence="3">
    <location>
        <begin position="251"/>
        <end position="299"/>
    </location>
</feature>
<feature type="region of interest" description="Disordered" evidence="3">
    <location>
        <begin position="311"/>
        <end position="368"/>
    </location>
</feature>
<feature type="coiled-coil region" evidence="2">
    <location>
        <begin position="660"/>
        <end position="710"/>
    </location>
</feature>
<feature type="compositionally biased region" description="Polar residues" evidence="3">
    <location>
        <begin position="264"/>
        <end position="277"/>
    </location>
</feature>
<feature type="compositionally biased region" description="Basic and acidic residues" evidence="3">
    <location>
        <begin position="324"/>
        <end position="337"/>
    </location>
</feature>
<feature type="compositionally biased region" description="Polar residues" evidence="3">
    <location>
        <begin position="344"/>
        <end position="358"/>
    </location>
</feature>
<accession>O83842</accession>
<name>FLID_TREPA</name>
<dbReference type="EMBL" id="AE000520">
    <property type="protein sequence ID" value="AAC65836.1"/>
    <property type="molecule type" value="Genomic_DNA"/>
</dbReference>
<dbReference type="PIR" id="F71270">
    <property type="entry name" value="F71270"/>
</dbReference>
<dbReference type="RefSeq" id="WP_010882315.1">
    <property type="nucleotide sequence ID" value="NC_021490.2"/>
</dbReference>
<dbReference type="SMR" id="O83842"/>
<dbReference type="IntAct" id="O83842">
    <property type="interactions" value="1"/>
</dbReference>
<dbReference type="STRING" id="243276.TP_0872"/>
<dbReference type="EnsemblBacteria" id="AAC65836">
    <property type="protein sequence ID" value="AAC65836"/>
    <property type="gene ID" value="TP_0872"/>
</dbReference>
<dbReference type="GeneID" id="93876626"/>
<dbReference type="KEGG" id="tpa:TP_0872"/>
<dbReference type="KEGG" id="tpw:TPANIC_0872"/>
<dbReference type="eggNOG" id="COG0373">
    <property type="taxonomic scope" value="Bacteria"/>
</dbReference>
<dbReference type="eggNOG" id="COG1345">
    <property type="taxonomic scope" value="Bacteria"/>
</dbReference>
<dbReference type="HOGENOM" id="CLU_028399_0_0_12"/>
<dbReference type="OrthoDB" id="349896at2"/>
<dbReference type="Proteomes" id="UP000000811">
    <property type="component" value="Chromosome"/>
</dbReference>
<dbReference type="GO" id="GO:0009421">
    <property type="term" value="C:bacterial-type flagellum filament cap"/>
    <property type="evidence" value="ECO:0007669"/>
    <property type="project" value="InterPro"/>
</dbReference>
<dbReference type="GO" id="GO:0009424">
    <property type="term" value="C:bacterial-type flagellum hook"/>
    <property type="evidence" value="ECO:0007669"/>
    <property type="project" value="InterPro"/>
</dbReference>
<dbReference type="GO" id="GO:0055040">
    <property type="term" value="C:periplasmic flagellum"/>
    <property type="evidence" value="ECO:0007669"/>
    <property type="project" value="UniProtKB-SubCell"/>
</dbReference>
<dbReference type="GO" id="GO:0071973">
    <property type="term" value="P:bacterial-type flagellum-dependent cell motility"/>
    <property type="evidence" value="ECO:0007669"/>
    <property type="project" value="TreeGrafter"/>
</dbReference>
<dbReference type="GO" id="GO:0007155">
    <property type="term" value="P:cell adhesion"/>
    <property type="evidence" value="ECO:0007669"/>
    <property type="project" value="InterPro"/>
</dbReference>
<dbReference type="InterPro" id="IPR040026">
    <property type="entry name" value="FliD"/>
</dbReference>
<dbReference type="InterPro" id="IPR010809">
    <property type="entry name" value="FliD_C"/>
</dbReference>
<dbReference type="InterPro" id="IPR003481">
    <property type="entry name" value="FliD_N"/>
</dbReference>
<dbReference type="NCBIfam" id="NF005188">
    <property type="entry name" value="PRK06664.1"/>
    <property type="match status" value="1"/>
</dbReference>
<dbReference type="PANTHER" id="PTHR30288">
    <property type="entry name" value="FLAGELLAR CAP/ASSEMBLY PROTEIN FLID"/>
    <property type="match status" value="1"/>
</dbReference>
<dbReference type="PANTHER" id="PTHR30288:SF0">
    <property type="entry name" value="FLAGELLAR HOOK-ASSOCIATED PROTEIN 2"/>
    <property type="match status" value="1"/>
</dbReference>
<dbReference type="Pfam" id="PF07195">
    <property type="entry name" value="FliD_C"/>
    <property type="match status" value="1"/>
</dbReference>
<dbReference type="Pfam" id="PF02465">
    <property type="entry name" value="FliD_N"/>
    <property type="match status" value="1"/>
</dbReference>
<gene>
    <name type="primary">fliD</name>
    <name type="ordered locus">TP_0872</name>
</gene>
<comment type="function">
    <text evidence="1">Required for the morphogenesis and for the elongation of the flagellar filament by facilitating polymerization of the flagellin monomers at the tip of growing filament. Forms a capping structure, which prevents flagellin subunits (transported through the central channel of the flagellum) from leaking out without polymerization at the distal end (By similarity).</text>
</comment>
<comment type="subunit">
    <text evidence="1">Homopentamer.</text>
</comment>
<comment type="subcellular location">
    <subcellularLocation>
        <location>Periplasmic flagellum</location>
    </subcellularLocation>
    <subcellularLocation>
        <location>Periplasm</location>
    </subcellularLocation>
</comment>
<comment type="similarity">
    <text evidence="4">Belongs to the FliD family.</text>
</comment>
<protein>
    <recommendedName>
        <fullName>Flagellar hook-associated protein 2</fullName>
        <shortName>HAP2</shortName>
    </recommendedName>
    <alternativeName>
        <fullName>Filament cap protein</fullName>
    </alternativeName>
    <alternativeName>
        <fullName>Flagellar cap protein</fullName>
    </alternativeName>
</protein>
<reference key="1">
    <citation type="journal article" date="1998" name="Science">
        <title>Complete genome sequence of Treponema pallidum, the syphilis spirochete.</title>
        <authorList>
            <person name="Fraser C.M."/>
            <person name="Norris S.J."/>
            <person name="Weinstock G.M."/>
            <person name="White O."/>
            <person name="Sutton G.G."/>
            <person name="Dodson R.J."/>
            <person name="Gwinn M.L."/>
            <person name="Hickey E.K."/>
            <person name="Clayton R.A."/>
            <person name="Ketchum K.A."/>
            <person name="Sodergren E."/>
            <person name="Hardham J.M."/>
            <person name="McLeod M.P."/>
            <person name="Salzberg S.L."/>
            <person name="Peterson J.D."/>
            <person name="Khalak H.G."/>
            <person name="Richardson D.L."/>
            <person name="Howell J.K."/>
            <person name="Chidambaram M."/>
            <person name="Utterback T.R."/>
            <person name="McDonald L.A."/>
            <person name="Artiach P."/>
            <person name="Bowman C."/>
            <person name="Cotton M.D."/>
            <person name="Fujii C."/>
            <person name="Garland S.A."/>
            <person name="Hatch B."/>
            <person name="Horst K."/>
            <person name="Roberts K.M."/>
            <person name="Sandusky M."/>
            <person name="Weidman J.F."/>
            <person name="Smith H.O."/>
            <person name="Venter J.C."/>
        </authorList>
    </citation>
    <scope>NUCLEOTIDE SEQUENCE [LARGE SCALE GENOMIC DNA]</scope>
    <source>
        <strain>Nichols</strain>
    </source>
</reference>